<dbReference type="EMBL" id="FM242711">
    <property type="protein sequence ID" value="CAS03794.1"/>
    <property type="molecule type" value="Genomic_DNA"/>
</dbReference>
<dbReference type="RefSeq" id="WP_003723768.1">
    <property type="nucleotide sequence ID" value="NC_012488.1"/>
</dbReference>
<dbReference type="SMR" id="C1L302"/>
<dbReference type="KEGG" id="lmc:Lm4b_00005"/>
<dbReference type="HOGENOM" id="CLU_040267_0_1_9"/>
<dbReference type="GO" id="GO:0005737">
    <property type="term" value="C:cytoplasm"/>
    <property type="evidence" value="ECO:0007669"/>
    <property type="project" value="UniProtKB-SubCell"/>
</dbReference>
<dbReference type="GO" id="GO:0005524">
    <property type="term" value="F:ATP binding"/>
    <property type="evidence" value="ECO:0007669"/>
    <property type="project" value="UniProtKB-UniRule"/>
</dbReference>
<dbReference type="GO" id="GO:0003697">
    <property type="term" value="F:single-stranded DNA binding"/>
    <property type="evidence" value="ECO:0007669"/>
    <property type="project" value="UniProtKB-UniRule"/>
</dbReference>
<dbReference type="GO" id="GO:0006260">
    <property type="term" value="P:DNA replication"/>
    <property type="evidence" value="ECO:0007669"/>
    <property type="project" value="UniProtKB-UniRule"/>
</dbReference>
<dbReference type="GO" id="GO:0000731">
    <property type="term" value="P:DNA synthesis involved in DNA repair"/>
    <property type="evidence" value="ECO:0007669"/>
    <property type="project" value="TreeGrafter"/>
</dbReference>
<dbReference type="GO" id="GO:0006302">
    <property type="term" value="P:double-strand break repair"/>
    <property type="evidence" value="ECO:0007669"/>
    <property type="project" value="TreeGrafter"/>
</dbReference>
<dbReference type="GO" id="GO:0009432">
    <property type="term" value="P:SOS response"/>
    <property type="evidence" value="ECO:0007669"/>
    <property type="project" value="UniProtKB-UniRule"/>
</dbReference>
<dbReference type="CDD" id="cd03242">
    <property type="entry name" value="ABC_RecF"/>
    <property type="match status" value="1"/>
</dbReference>
<dbReference type="FunFam" id="1.20.1050.90:FF:000002">
    <property type="entry name" value="DNA replication and repair protein RecF"/>
    <property type="match status" value="1"/>
</dbReference>
<dbReference type="Gene3D" id="3.40.50.300">
    <property type="entry name" value="P-loop containing nucleotide triphosphate hydrolases"/>
    <property type="match status" value="1"/>
</dbReference>
<dbReference type="Gene3D" id="1.20.1050.90">
    <property type="entry name" value="RecF/RecN/SMC, N-terminal domain"/>
    <property type="match status" value="1"/>
</dbReference>
<dbReference type="HAMAP" id="MF_00365">
    <property type="entry name" value="RecF"/>
    <property type="match status" value="1"/>
</dbReference>
<dbReference type="InterPro" id="IPR001238">
    <property type="entry name" value="DNA-binding_RecF"/>
</dbReference>
<dbReference type="InterPro" id="IPR018078">
    <property type="entry name" value="DNA-binding_RecF_CS"/>
</dbReference>
<dbReference type="InterPro" id="IPR027417">
    <property type="entry name" value="P-loop_NTPase"/>
</dbReference>
<dbReference type="InterPro" id="IPR003395">
    <property type="entry name" value="RecF/RecN/SMC_N"/>
</dbReference>
<dbReference type="InterPro" id="IPR042174">
    <property type="entry name" value="RecF_2"/>
</dbReference>
<dbReference type="NCBIfam" id="TIGR00611">
    <property type="entry name" value="recf"/>
    <property type="match status" value="1"/>
</dbReference>
<dbReference type="PANTHER" id="PTHR32182">
    <property type="entry name" value="DNA REPLICATION AND REPAIR PROTEIN RECF"/>
    <property type="match status" value="1"/>
</dbReference>
<dbReference type="PANTHER" id="PTHR32182:SF0">
    <property type="entry name" value="DNA REPLICATION AND REPAIR PROTEIN RECF"/>
    <property type="match status" value="1"/>
</dbReference>
<dbReference type="Pfam" id="PF02463">
    <property type="entry name" value="SMC_N"/>
    <property type="match status" value="1"/>
</dbReference>
<dbReference type="SUPFAM" id="SSF52540">
    <property type="entry name" value="P-loop containing nucleoside triphosphate hydrolases"/>
    <property type="match status" value="1"/>
</dbReference>
<dbReference type="PROSITE" id="PS00617">
    <property type="entry name" value="RECF_1"/>
    <property type="match status" value="1"/>
</dbReference>
<dbReference type="PROSITE" id="PS00618">
    <property type="entry name" value="RECF_2"/>
    <property type="match status" value="1"/>
</dbReference>
<protein>
    <recommendedName>
        <fullName evidence="1">DNA replication and repair protein RecF</fullName>
    </recommendedName>
</protein>
<proteinExistence type="inferred from homology"/>
<evidence type="ECO:0000255" key="1">
    <source>
        <dbReference type="HAMAP-Rule" id="MF_00365"/>
    </source>
</evidence>
<comment type="function">
    <text evidence="1">The RecF protein is involved in DNA metabolism; it is required for DNA replication and normal SOS inducibility. RecF binds preferentially to single-stranded, linear DNA. It also seems to bind ATP.</text>
</comment>
<comment type="subcellular location">
    <subcellularLocation>
        <location evidence="1">Cytoplasm</location>
    </subcellularLocation>
</comment>
<comment type="similarity">
    <text evidence="1">Belongs to the RecF family.</text>
</comment>
<gene>
    <name evidence="1" type="primary">recF</name>
    <name type="ordered locus">Lm4b_00005</name>
</gene>
<keyword id="KW-0067">ATP-binding</keyword>
<keyword id="KW-0963">Cytoplasm</keyword>
<keyword id="KW-0227">DNA damage</keyword>
<keyword id="KW-0234">DNA repair</keyword>
<keyword id="KW-0235">DNA replication</keyword>
<keyword id="KW-0238">DNA-binding</keyword>
<keyword id="KW-0547">Nucleotide-binding</keyword>
<keyword id="KW-0742">SOS response</keyword>
<organism>
    <name type="scientific">Listeria monocytogenes serotype 4b (strain CLIP80459)</name>
    <dbReference type="NCBI Taxonomy" id="568819"/>
    <lineage>
        <taxon>Bacteria</taxon>
        <taxon>Bacillati</taxon>
        <taxon>Bacillota</taxon>
        <taxon>Bacilli</taxon>
        <taxon>Bacillales</taxon>
        <taxon>Listeriaceae</taxon>
        <taxon>Listeria</taxon>
    </lineage>
</organism>
<name>RECF_LISMC</name>
<reference key="1">
    <citation type="journal article" date="2012" name="BMC Genomics">
        <title>Comparative genomics and transcriptomics of lineages I, II, and III strains of Listeria monocytogenes.</title>
        <authorList>
            <person name="Hain T."/>
            <person name="Ghai R."/>
            <person name="Billion A."/>
            <person name="Kuenne C.T."/>
            <person name="Steinweg C."/>
            <person name="Izar B."/>
            <person name="Mohamed W."/>
            <person name="Mraheil M."/>
            <person name="Domann E."/>
            <person name="Schaffrath S."/>
            <person name="Karst U."/>
            <person name="Goesmann A."/>
            <person name="Oehm S."/>
            <person name="Puhler A."/>
            <person name="Merkl R."/>
            <person name="Vorwerk S."/>
            <person name="Glaser P."/>
            <person name="Garrido P."/>
            <person name="Rusniok C."/>
            <person name="Buchrieser C."/>
            <person name="Goebel W."/>
            <person name="Chakraborty T."/>
        </authorList>
    </citation>
    <scope>NUCLEOTIDE SEQUENCE [LARGE SCALE GENOMIC DNA]</scope>
    <source>
        <strain>CLIP80459</strain>
    </source>
</reference>
<sequence>MHLESIVLRNFRNYENLELEFSPSVNVFLGENAQGKTNLLEAVLMLALAKSHRTTNDKDFIMWEKEEAKMEGRIAKHGQSVPLELAITQKGKRAKVNHLEQKKLSQYVGNLNVVIFAPEDLSLVKGAPGIRRRFLNMEIGQMQPIYLHNLSEYQRILQQRNQYLKMLQMKRKVDPILLDILTEQFADVAINLTKRRADFIQKLEAYAAPIHHQISRGLETLKIEYKASITLNGDDPEVWKADLLQKMESIKQREIDRGVTLIGPHRDDSLFYINGQNVQDFGSQGQQRTTALSIKLAEIDLIHEETGEYPVLLLDDVLSELDDYRQSHLLGAIEGKVQTFVTTTSTSGIDHETLKQATTFYVEKGTVKKS</sequence>
<feature type="chain" id="PRO_1000205496" description="DNA replication and repair protein RecF">
    <location>
        <begin position="1"/>
        <end position="370"/>
    </location>
</feature>
<feature type="binding site" evidence="1">
    <location>
        <begin position="30"/>
        <end position="37"/>
    </location>
    <ligand>
        <name>ATP</name>
        <dbReference type="ChEBI" id="CHEBI:30616"/>
    </ligand>
</feature>
<accession>C1L302</accession>